<keyword id="KW-0408">Iron</keyword>
<keyword id="KW-0479">Metal-binding</keyword>
<keyword id="KW-1185">Reference proteome</keyword>
<name>CYAY_PSEAE</name>
<protein>
    <recommendedName>
        <fullName evidence="1">Iron-sulfur cluster assembly protein CyaY</fullName>
    </recommendedName>
</protein>
<evidence type="ECO:0000255" key="1">
    <source>
        <dbReference type="HAMAP-Rule" id="MF_00142"/>
    </source>
</evidence>
<evidence type="ECO:0000305" key="2"/>
<gene>
    <name evidence="1" type="primary">cyaY</name>
    <name type="ordered locus">PA5275</name>
</gene>
<accession>Q9HTS5</accession>
<comment type="function">
    <text evidence="1">Involved in iron-sulfur (Fe-S) cluster assembly. May act as a regulator of Fe-S biogenesis.</text>
</comment>
<comment type="similarity">
    <text evidence="1 2">Belongs to the frataxin family.</text>
</comment>
<comment type="sequence caution" evidence="2">
    <conflict type="erroneous initiation">
        <sequence resource="EMBL-CDS" id="AAG08660"/>
    </conflict>
</comment>
<sequence>MNEARFHDLVDALQQQVEDAFDDSDLDLDLENAGGVLTVRFENGSQLILSRQAPLRQLWVAAKSGGFHFDYDEASGLWRHDGSQEPLGALLNRATLEQGGEDVEFPGL</sequence>
<proteinExistence type="inferred from homology"/>
<reference key="1">
    <citation type="journal article" date="2000" name="Nature">
        <title>Complete genome sequence of Pseudomonas aeruginosa PAO1, an opportunistic pathogen.</title>
        <authorList>
            <person name="Stover C.K."/>
            <person name="Pham X.-Q.T."/>
            <person name="Erwin A.L."/>
            <person name="Mizoguchi S.D."/>
            <person name="Warrener P."/>
            <person name="Hickey M.J."/>
            <person name="Brinkman F.S.L."/>
            <person name="Hufnagle W.O."/>
            <person name="Kowalik D.J."/>
            <person name="Lagrou M."/>
            <person name="Garber R.L."/>
            <person name="Goltry L."/>
            <person name="Tolentino E."/>
            <person name="Westbrock-Wadman S."/>
            <person name="Yuan Y."/>
            <person name="Brody L.L."/>
            <person name="Coulter S.N."/>
            <person name="Folger K.R."/>
            <person name="Kas A."/>
            <person name="Larbig K."/>
            <person name="Lim R.M."/>
            <person name="Smith K.A."/>
            <person name="Spencer D.H."/>
            <person name="Wong G.K.-S."/>
            <person name="Wu Z."/>
            <person name="Paulsen I.T."/>
            <person name="Reizer J."/>
            <person name="Saier M.H. Jr."/>
            <person name="Hancock R.E.W."/>
            <person name="Lory S."/>
            <person name="Olson M.V."/>
        </authorList>
    </citation>
    <scope>NUCLEOTIDE SEQUENCE [LARGE SCALE GENOMIC DNA]</scope>
    <source>
        <strain>ATCC 15692 / DSM 22644 / CIP 104116 / JCM 14847 / LMG 12228 / 1C / PRS 101 / PAO1</strain>
    </source>
</reference>
<dbReference type="EMBL" id="AE004091">
    <property type="protein sequence ID" value="AAG08660.1"/>
    <property type="status" value="ALT_INIT"/>
    <property type="molecule type" value="Genomic_DNA"/>
</dbReference>
<dbReference type="PIR" id="D82986">
    <property type="entry name" value="D82986"/>
</dbReference>
<dbReference type="RefSeq" id="NP_253962.1">
    <property type="nucleotide sequence ID" value="NC_002516.2"/>
</dbReference>
<dbReference type="SMR" id="Q9HTS5"/>
<dbReference type="FunCoup" id="Q9HTS5">
    <property type="interactions" value="297"/>
</dbReference>
<dbReference type="STRING" id="208964.PA5275"/>
<dbReference type="PaxDb" id="208964-PA5275"/>
<dbReference type="DNASU" id="877753"/>
<dbReference type="GeneID" id="877753"/>
<dbReference type="KEGG" id="pae:PA5275"/>
<dbReference type="PATRIC" id="fig|208964.12.peg.5529"/>
<dbReference type="PseudoCAP" id="PA5275"/>
<dbReference type="HOGENOM" id="CLU_080880_3_0_6"/>
<dbReference type="InParanoid" id="Q9HTS5"/>
<dbReference type="OrthoDB" id="285675at2"/>
<dbReference type="PhylomeDB" id="Q9HTS5"/>
<dbReference type="Proteomes" id="UP000002438">
    <property type="component" value="Chromosome"/>
</dbReference>
<dbReference type="GO" id="GO:0005829">
    <property type="term" value="C:cytosol"/>
    <property type="evidence" value="ECO:0000318"/>
    <property type="project" value="GO_Central"/>
</dbReference>
<dbReference type="GO" id="GO:0008199">
    <property type="term" value="F:ferric iron binding"/>
    <property type="evidence" value="ECO:0000318"/>
    <property type="project" value="GO_Central"/>
</dbReference>
<dbReference type="GO" id="GO:0008198">
    <property type="term" value="F:ferrous iron binding"/>
    <property type="evidence" value="ECO:0000318"/>
    <property type="project" value="GO_Central"/>
</dbReference>
<dbReference type="GO" id="GO:0016226">
    <property type="term" value="P:iron-sulfur cluster assembly"/>
    <property type="evidence" value="ECO:0000318"/>
    <property type="project" value="GO_Central"/>
</dbReference>
<dbReference type="CDD" id="cd00503">
    <property type="entry name" value="Frataxin"/>
    <property type="match status" value="1"/>
</dbReference>
<dbReference type="Gene3D" id="3.30.920.10">
    <property type="entry name" value="Frataxin/CyaY"/>
    <property type="match status" value="1"/>
</dbReference>
<dbReference type="HAMAP" id="MF_00142">
    <property type="entry name" value="CyaY"/>
    <property type="match status" value="1"/>
</dbReference>
<dbReference type="InterPro" id="IPR047584">
    <property type="entry name" value="CyaY"/>
</dbReference>
<dbReference type="InterPro" id="IPR002908">
    <property type="entry name" value="Frataxin/CyaY"/>
</dbReference>
<dbReference type="InterPro" id="IPR036524">
    <property type="entry name" value="Frataxin/CyaY_sf"/>
</dbReference>
<dbReference type="InterPro" id="IPR020895">
    <property type="entry name" value="Frataxin_CS"/>
</dbReference>
<dbReference type="NCBIfam" id="TIGR03421">
    <property type="entry name" value="FeS_CyaY"/>
    <property type="match status" value="1"/>
</dbReference>
<dbReference type="PANTHER" id="PTHR16821">
    <property type="entry name" value="FRATAXIN"/>
    <property type="match status" value="1"/>
</dbReference>
<dbReference type="PANTHER" id="PTHR16821:SF2">
    <property type="entry name" value="FRATAXIN, MITOCHONDRIAL"/>
    <property type="match status" value="1"/>
</dbReference>
<dbReference type="Pfam" id="PF01491">
    <property type="entry name" value="Frataxin_Cyay"/>
    <property type="match status" value="1"/>
</dbReference>
<dbReference type="SMART" id="SM01219">
    <property type="entry name" value="Frataxin_Cyay"/>
    <property type="match status" value="1"/>
</dbReference>
<dbReference type="SUPFAM" id="SSF55387">
    <property type="entry name" value="Frataxin/Nqo15-like"/>
    <property type="match status" value="1"/>
</dbReference>
<dbReference type="PROSITE" id="PS01344">
    <property type="entry name" value="FRATAXIN_1"/>
    <property type="match status" value="1"/>
</dbReference>
<dbReference type="PROSITE" id="PS50810">
    <property type="entry name" value="FRATAXIN_2"/>
    <property type="match status" value="1"/>
</dbReference>
<organism>
    <name type="scientific">Pseudomonas aeruginosa (strain ATCC 15692 / DSM 22644 / CIP 104116 / JCM 14847 / LMG 12228 / 1C / PRS 101 / PAO1)</name>
    <dbReference type="NCBI Taxonomy" id="208964"/>
    <lineage>
        <taxon>Bacteria</taxon>
        <taxon>Pseudomonadati</taxon>
        <taxon>Pseudomonadota</taxon>
        <taxon>Gammaproteobacteria</taxon>
        <taxon>Pseudomonadales</taxon>
        <taxon>Pseudomonadaceae</taxon>
        <taxon>Pseudomonas</taxon>
    </lineage>
</organism>
<feature type="chain" id="PRO_0000193950" description="Iron-sulfur cluster assembly protein CyaY">
    <location>
        <begin position="1"/>
        <end position="108"/>
    </location>
</feature>